<sequence length="383" mass="41927">MEVLATDTVSQQERLQAIAEKRRKQAEIESKRRQLEDDRRQLQYLKSKALRERWLLEGTPSSASEGDEDMRKQMQEDEQKARSLEESITRLEKEIDVLEFGESAPAAPKENSAAPSPIRPHSTSPAKEEQKSETMVNAQQTPLGTPKENRKSTPVRSPGGSTMMKAAMYSVEITVEKDKVTGETRVLSSTTLLPRDPLPQGVKVYEDETKVVHAVDGLSENGIQPLSSSEVDELIHKADEVTLSEAGSTTGPAEPRGLAEDVTRTTPSRREITGVEAQPGEATSGPPGIQPGQEPPVTMVFMGYQNVEDEAETKKVLGLQDTIKAELVVIEDSVTPREPAPLNGSAAELPATKEENQTGPTTTPSDTQDLDMKKPRCRCCSVM</sequence>
<dbReference type="EMBL" id="AB058889">
    <property type="protein sequence ID" value="BAB68565.1"/>
    <property type="molecule type" value="mRNA"/>
</dbReference>
<dbReference type="EMBL" id="CH474029">
    <property type="protein sequence ID" value="EDL89390.1"/>
    <property type="molecule type" value="Genomic_DNA"/>
</dbReference>
<dbReference type="EMBL" id="BC072525">
    <property type="protein sequence ID" value="AAH72525.1"/>
    <property type="molecule type" value="mRNA"/>
</dbReference>
<dbReference type="RefSeq" id="NP_570842.1">
    <property type="nucleotide sequence ID" value="NM_130829.2"/>
</dbReference>
<dbReference type="SMR" id="Q920Q0"/>
<dbReference type="BioGRID" id="250977">
    <property type="interactions" value="1"/>
</dbReference>
<dbReference type="FunCoup" id="Q920Q0">
    <property type="interactions" value="1182"/>
</dbReference>
<dbReference type="STRING" id="10116.ENSRNOP00000013762"/>
<dbReference type="iPTMnet" id="Q920Q0"/>
<dbReference type="PhosphoSitePlus" id="Q920Q0"/>
<dbReference type="SwissPalm" id="Q920Q0"/>
<dbReference type="jPOST" id="Q920Q0"/>
<dbReference type="PaxDb" id="10116-ENSRNOP00000013762"/>
<dbReference type="Ensembl" id="ENSRNOT00000013762.8">
    <property type="protein sequence ID" value="ENSRNOP00000013762.5"/>
    <property type="gene ID" value="ENSRNOG00000009760.9"/>
</dbReference>
<dbReference type="GeneID" id="170673"/>
<dbReference type="KEGG" id="rno:170673"/>
<dbReference type="UCSC" id="RGD:620341">
    <property type="organism name" value="rat"/>
</dbReference>
<dbReference type="AGR" id="RGD:620341"/>
<dbReference type="CTD" id="5064"/>
<dbReference type="RGD" id="620341">
    <property type="gene designation" value="Palm"/>
</dbReference>
<dbReference type="eggNOG" id="ENOG502QQ2W">
    <property type="taxonomic scope" value="Eukaryota"/>
</dbReference>
<dbReference type="GeneTree" id="ENSGT00940000160580"/>
<dbReference type="HOGENOM" id="CLU_038333_2_0_1"/>
<dbReference type="InParanoid" id="Q920Q0"/>
<dbReference type="OrthoDB" id="87701at9989"/>
<dbReference type="PhylomeDB" id="Q920Q0"/>
<dbReference type="TreeFam" id="TF105402"/>
<dbReference type="PRO" id="PR:Q920Q0"/>
<dbReference type="Proteomes" id="UP000002494">
    <property type="component" value="Chromosome 7"/>
</dbReference>
<dbReference type="Proteomes" id="UP000234681">
    <property type="component" value="Chromosome 7"/>
</dbReference>
<dbReference type="Bgee" id="ENSRNOG00000009760">
    <property type="expression patterns" value="Expressed in frontal cortex and 19 other cell types or tissues"/>
</dbReference>
<dbReference type="GO" id="GO:0016327">
    <property type="term" value="C:apicolateral plasma membrane"/>
    <property type="evidence" value="ECO:0000314"/>
    <property type="project" value="UniProtKB"/>
</dbReference>
<dbReference type="GO" id="GO:0030424">
    <property type="term" value="C:axon"/>
    <property type="evidence" value="ECO:0000314"/>
    <property type="project" value="UniProtKB"/>
</dbReference>
<dbReference type="GO" id="GO:0016323">
    <property type="term" value="C:basolateral plasma membrane"/>
    <property type="evidence" value="ECO:0000314"/>
    <property type="project" value="UniProtKB"/>
</dbReference>
<dbReference type="GO" id="GO:0005737">
    <property type="term" value="C:cytoplasm"/>
    <property type="evidence" value="ECO:0000266"/>
    <property type="project" value="RGD"/>
</dbReference>
<dbReference type="GO" id="GO:0009898">
    <property type="term" value="C:cytoplasmic side of plasma membrane"/>
    <property type="evidence" value="ECO:0000304"/>
    <property type="project" value="RGD"/>
</dbReference>
<dbReference type="GO" id="GO:0032590">
    <property type="term" value="C:dendrite membrane"/>
    <property type="evidence" value="ECO:0000314"/>
    <property type="project" value="UniProtKB"/>
</dbReference>
<dbReference type="GO" id="GO:0032591">
    <property type="term" value="C:dendritic spine membrane"/>
    <property type="evidence" value="ECO:0000314"/>
    <property type="project" value="UniProtKB"/>
</dbReference>
<dbReference type="GO" id="GO:0030175">
    <property type="term" value="C:filopodium"/>
    <property type="evidence" value="ECO:0000266"/>
    <property type="project" value="RGD"/>
</dbReference>
<dbReference type="GO" id="GO:0031527">
    <property type="term" value="C:filopodium membrane"/>
    <property type="evidence" value="ECO:0000266"/>
    <property type="project" value="RGD"/>
</dbReference>
<dbReference type="GO" id="GO:0098978">
    <property type="term" value="C:glutamatergic synapse"/>
    <property type="evidence" value="ECO:0000314"/>
    <property type="project" value="SynGO"/>
</dbReference>
<dbReference type="GO" id="GO:0044309">
    <property type="term" value="C:neuron spine"/>
    <property type="evidence" value="ECO:0000266"/>
    <property type="project" value="RGD"/>
</dbReference>
<dbReference type="GO" id="GO:0005886">
    <property type="term" value="C:plasma membrane"/>
    <property type="evidence" value="ECO:0000314"/>
    <property type="project" value="UniProtKB"/>
</dbReference>
<dbReference type="GO" id="GO:0098794">
    <property type="term" value="C:postsynapse"/>
    <property type="evidence" value="ECO:0000314"/>
    <property type="project" value="SynGO"/>
</dbReference>
<dbReference type="GO" id="GO:0014069">
    <property type="term" value="C:postsynaptic density"/>
    <property type="evidence" value="ECO:0000266"/>
    <property type="project" value="RGD"/>
</dbReference>
<dbReference type="GO" id="GO:0097060">
    <property type="term" value="C:synaptic membrane"/>
    <property type="evidence" value="ECO:0000318"/>
    <property type="project" value="GO_Central"/>
</dbReference>
<dbReference type="GO" id="GO:0031750">
    <property type="term" value="F:D3 dopamine receptor binding"/>
    <property type="evidence" value="ECO:0000266"/>
    <property type="project" value="RGD"/>
</dbReference>
<dbReference type="GO" id="GO:0007193">
    <property type="term" value="P:adenylate cyclase-inhibiting G protein-coupled receptor signaling pathway"/>
    <property type="evidence" value="ECO:0000266"/>
    <property type="project" value="RGD"/>
</dbReference>
<dbReference type="GO" id="GO:0071257">
    <property type="term" value="P:cellular response to electrical stimulus"/>
    <property type="evidence" value="ECO:0000266"/>
    <property type="project" value="RGD"/>
</dbReference>
<dbReference type="GO" id="GO:0007010">
    <property type="term" value="P:cytoskeleton organization"/>
    <property type="evidence" value="ECO:0000266"/>
    <property type="project" value="RGD"/>
</dbReference>
<dbReference type="GO" id="GO:0060160">
    <property type="term" value="P:negative regulation of dopamine receptor signaling pathway"/>
    <property type="evidence" value="ECO:0000266"/>
    <property type="project" value="RGD"/>
</dbReference>
<dbReference type="GO" id="GO:0060999">
    <property type="term" value="P:positive regulation of dendritic spine development"/>
    <property type="evidence" value="ECO:0000266"/>
    <property type="project" value="RGD"/>
</dbReference>
<dbReference type="GO" id="GO:0051491">
    <property type="term" value="P:positive regulation of filopodium assembly"/>
    <property type="evidence" value="ECO:0000266"/>
    <property type="project" value="RGD"/>
</dbReference>
<dbReference type="GO" id="GO:0008104">
    <property type="term" value="P:protein localization"/>
    <property type="evidence" value="ECO:0000266"/>
    <property type="project" value="RGD"/>
</dbReference>
<dbReference type="GO" id="GO:0072659">
    <property type="term" value="P:protein localization to plasma membrane"/>
    <property type="evidence" value="ECO:0000266"/>
    <property type="project" value="RGD"/>
</dbReference>
<dbReference type="GO" id="GO:0008360">
    <property type="term" value="P:regulation of cell shape"/>
    <property type="evidence" value="ECO:0000266"/>
    <property type="project" value="RGD"/>
</dbReference>
<dbReference type="GO" id="GO:0150052">
    <property type="term" value="P:regulation of postsynapse assembly"/>
    <property type="evidence" value="ECO:0000314"/>
    <property type="project" value="SynGO"/>
</dbReference>
<dbReference type="GO" id="GO:0060074">
    <property type="term" value="P:synapse maturation"/>
    <property type="evidence" value="ECO:0000266"/>
    <property type="project" value="RGD"/>
</dbReference>
<dbReference type="InterPro" id="IPR004965">
    <property type="entry name" value="Paralemmin"/>
</dbReference>
<dbReference type="PANTHER" id="PTHR10498:SF6">
    <property type="entry name" value="PARALEMMIN-1"/>
    <property type="match status" value="1"/>
</dbReference>
<dbReference type="PANTHER" id="PTHR10498">
    <property type="entry name" value="PARALEMMIN-RELATED"/>
    <property type="match status" value="1"/>
</dbReference>
<dbReference type="Pfam" id="PF03285">
    <property type="entry name" value="Paralemmin"/>
    <property type="match status" value="1"/>
</dbReference>
<comment type="function">
    <text evidence="1">Involved in plasma membrane dynamics and cell process formation. Necessary for axonal and dendritic filopodia induction, for dendritic spine maturation and synapse formation in a palmitoylation-dependent manner (By similarity).</text>
</comment>
<comment type="subunit">
    <text evidence="1">Interacts with dopamine receptor DRD3.</text>
</comment>
<comment type="subcellular location">
    <subcellularLocation>
        <location evidence="7">Cell membrane</location>
        <topology evidence="7">Lipid-anchor</topology>
        <orientation evidence="7">Cytoplasmic side</orientation>
    </subcellularLocation>
    <subcellularLocation>
        <location evidence="1">Cell projection</location>
        <location evidence="1">Filopodium membrane</location>
        <topology evidence="1">Lipid-anchor</topology>
    </subcellularLocation>
    <subcellularLocation>
        <location evidence="7">Cell projection</location>
        <location evidence="7">Axon</location>
    </subcellularLocation>
    <subcellularLocation>
        <location evidence="7">Cell projection</location>
        <location evidence="7">Dendrite</location>
    </subcellularLocation>
    <subcellularLocation>
        <location evidence="7">Cell projection</location>
        <location evidence="7">Dendritic spine</location>
    </subcellularLocation>
    <subcellularLocation>
        <location evidence="7">Basolateral cell membrane</location>
        <topology evidence="7">Lipid-anchor</topology>
    </subcellularLocation>
    <subcellularLocation>
        <location evidence="7">Apicolateral cell membrane</location>
        <topology evidence="7">Lipid-anchor</topology>
    </subcellularLocation>
    <text evidence="1">Translocation to the plasma membrane is enhanced upon stimulation of neuronal activity.</text>
</comment>
<comment type="tissue specificity">
    <text evidence="6 7">Expressed in neurons cells of neuropil-rich areas of the brain, in the Purkinje cells of the cerebellum, in cells of the cerebral cortex, hippocampus, brainstem nuclei and glial processes and sheaths. Expressed in the medulla of the adrenal chromaffin cells and renal duct cells (at protein level).</text>
</comment>
<comment type="developmental stage">
    <text evidence="6">Expressed in pyramidal neurons of the hippocampus at 18 dpc.</text>
</comment>
<comment type="similarity">
    <text evidence="8">Belongs to the paralemmin family.</text>
</comment>
<reference key="1">
    <citation type="submission" date="2001-03" db="EMBL/GenBank/DDBJ databases">
        <title>Characterization of synaptic membrane proteins of rat brain.</title>
        <authorList>
            <person name="Kumanogoh H."/>
            <person name="Maekawa S."/>
        </authorList>
    </citation>
    <scope>NUCLEOTIDE SEQUENCE [MRNA]</scope>
</reference>
<reference key="2">
    <citation type="submission" date="2005-07" db="EMBL/GenBank/DDBJ databases">
        <authorList>
            <person name="Mural R.J."/>
            <person name="Adams M.D."/>
            <person name="Myers E.W."/>
            <person name="Smith H.O."/>
            <person name="Venter J.C."/>
        </authorList>
    </citation>
    <scope>NUCLEOTIDE SEQUENCE [LARGE SCALE GENOMIC DNA]</scope>
    <source>
        <strain>Brown Norway</strain>
    </source>
</reference>
<reference key="3">
    <citation type="journal article" date="2004" name="Genome Res.">
        <title>The status, quality, and expansion of the NIH full-length cDNA project: the Mammalian Gene Collection (MGC).</title>
        <authorList>
            <consortium name="The MGC Project Team"/>
        </authorList>
    </citation>
    <scope>NUCLEOTIDE SEQUENCE [LARGE SCALE MRNA]</scope>
    <source>
        <tissue>Lung</tissue>
    </source>
</reference>
<reference key="4">
    <citation type="journal article" date="2006" name="Arch. Biochem. Biophys.">
        <title>Paralemmin interacts with D3 dopamine receptors: implications for membrane localization and cAMP signaling.</title>
        <authorList>
            <person name="Basile M."/>
            <person name="Lin R."/>
            <person name="Kabbani N."/>
            <person name="Karpa K."/>
            <person name="Kilimann M."/>
            <person name="Simpson I."/>
            <person name="Kester M."/>
        </authorList>
    </citation>
    <scope>TISSUE SPECIFICITY</scope>
    <scope>DEVELOPMENTAL STAGE</scope>
</reference>
<reference key="5">
    <citation type="journal article" date="2007" name="Histochem. Cell Biol.">
        <title>Cellular and subcellular localization of paralemmin-1, a protein involved in cell shape control, in the rat brain, adrenal gland and kidney.</title>
        <authorList>
            <person name="Kutzleb C."/>
            <person name="Petrasch-Parwez E."/>
            <person name="Kilimann M.W."/>
        </authorList>
    </citation>
    <scope>SUBCELLULAR LOCATION</scope>
    <scope>TISSUE SPECIFICITY</scope>
</reference>
<reference key="6">
    <citation type="journal article" date="2012" name="Nat. Commun.">
        <title>Quantitative maps of protein phosphorylation sites across 14 different rat organs and tissues.</title>
        <authorList>
            <person name="Lundby A."/>
            <person name="Secher A."/>
            <person name="Lage K."/>
            <person name="Nordsborg N.B."/>
            <person name="Dmytriyev A."/>
            <person name="Lundby C."/>
            <person name="Olsen J.V."/>
        </authorList>
    </citation>
    <scope>PHOSPHORYLATION [LARGE SCALE ANALYSIS] AT SER-116; SER-122; THR-141; THR-145; SER-157; SER-244 AND SER-345</scope>
    <scope>IDENTIFICATION BY MASS SPECTROMETRY [LARGE SCALE ANALYSIS]</scope>
</reference>
<organism>
    <name type="scientific">Rattus norvegicus</name>
    <name type="common">Rat</name>
    <dbReference type="NCBI Taxonomy" id="10116"/>
    <lineage>
        <taxon>Eukaryota</taxon>
        <taxon>Metazoa</taxon>
        <taxon>Chordata</taxon>
        <taxon>Craniata</taxon>
        <taxon>Vertebrata</taxon>
        <taxon>Euteleostomi</taxon>
        <taxon>Mammalia</taxon>
        <taxon>Eutheria</taxon>
        <taxon>Euarchontoglires</taxon>
        <taxon>Glires</taxon>
        <taxon>Rodentia</taxon>
        <taxon>Myomorpha</taxon>
        <taxon>Muroidea</taxon>
        <taxon>Muridae</taxon>
        <taxon>Murinae</taxon>
        <taxon>Rattus</taxon>
    </lineage>
</organism>
<keyword id="KW-0007">Acetylation</keyword>
<keyword id="KW-1003">Cell membrane</keyword>
<keyword id="KW-0966">Cell projection</keyword>
<keyword id="KW-0133">Cell shape</keyword>
<keyword id="KW-0175">Coiled coil</keyword>
<keyword id="KW-0449">Lipoprotein</keyword>
<keyword id="KW-0472">Membrane</keyword>
<keyword id="KW-0488">Methylation</keyword>
<keyword id="KW-0564">Palmitate</keyword>
<keyword id="KW-0597">Phosphoprotein</keyword>
<keyword id="KW-0636">Prenylation</keyword>
<keyword id="KW-1185">Reference proteome</keyword>
<keyword id="KW-0770">Synapse</keyword>
<proteinExistence type="evidence at protein level"/>
<feature type="chain" id="PRO_0000411054" description="Paralemmin-1">
    <location>
        <begin position="1"/>
        <end position="380"/>
    </location>
</feature>
<feature type="propeptide" id="PRO_0000411055" description="Removed in mature form" evidence="4">
    <location>
        <begin position="381"/>
        <end position="383"/>
    </location>
</feature>
<feature type="region of interest" description="Disordered" evidence="5">
    <location>
        <begin position="51"/>
        <end position="164"/>
    </location>
</feature>
<feature type="region of interest" description="Disordered" evidence="5">
    <location>
        <begin position="242"/>
        <end position="293"/>
    </location>
</feature>
<feature type="region of interest" description="Disordered" evidence="5">
    <location>
        <begin position="333"/>
        <end position="374"/>
    </location>
</feature>
<feature type="coiled-coil region" evidence="4">
    <location>
        <begin position="7"/>
        <end position="101"/>
    </location>
</feature>
<feature type="compositionally biased region" description="Basic and acidic residues" evidence="5">
    <location>
        <begin position="69"/>
        <end position="96"/>
    </location>
</feature>
<feature type="compositionally biased region" description="Polar residues" evidence="5">
    <location>
        <begin position="133"/>
        <end position="143"/>
    </location>
</feature>
<feature type="compositionally biased region" description="Basic and acidic residues" evidence="5">
    <location>
        <begin position="257"/>
        <end position="273"/>
    </location>
</feature>
<feature type="compositionally biased region" description="Polar residues" evidence="5">
    <location>
        <begin position="357"/>
        <end position="367"/>
    </location>
</feature>
<feature type="modified residue" description="N-acetylmethionine" evidence="2">
    <location>
        <position position="1"/>
    </location>
</feature>
<feature type="modified residue" description="Phosphoserine" evidence="9">
    <location>
        <position position="116"/>
    </location>
</feature>
<feature type="modified residue" description="Phosphoserine" evidence="9">
    <location>
        <position position="122"/>
    </location>
</feature>
<feature type="modified residue" description="Phosphoserine" evidence="2">
    <location>
        <position position="124"/>
    </location>
</feature>
<feature type="modified residue" description="Phosphothreonine" evidence="9">
    <location>
        <position position="141"/>
    </location>
</feature>
<feature type="modified residue" description="Phosphothreonine" evidence="9">
    <location>
        <position position="145"/>
    </location>
</feature>
<feature type="modified residue" description="Phosphothreonine" evidence="3">
    <location>
        <position position="153"/>
    </location>
</feature>
<feature type="modified residue" description="Phosphoserine" evidence="9">
    <location>
        <position position="157"/>
    </location>
</feature>
<feature type="modified residue" description="Phosphoserine" evidence="2">
    <location>
        <position position="161"/>
    </location>
</feature>
<feature type="modified residue" description="Phosphothreonine" evidence="3">
    <location>
        <position position="242"/>
    </location>
</feature>
<feature type="modified residue" description="Phosphoserine" evidence="9">
    <location>
        <position position="244"/>
    </location>
</feature>
<feature type="modified residue" description="Phosphoserine" evidence="9">
    <location>
        <position position="345"/>
    </location>
</feature>
<feature type="modified residue" description="Phosphothreonine" evidence="3">
    <location>
        <position position="361"/>
    </location>
</feature>
<feature type="modified residue" description="Phosphothreonine" evidence="3">
    <location>
        <position position="362"/>
    </location>
</feature>
<feature type="modified residue" description="Phosphothreonine" evidence="3">
    <location>
        <position position="363"/>
    </location>
</feature>
<feature type="modified residue" description="Phosphoserine" evidence="3">
    <location>
        <position position="365"/>
    </location>
</feature>
<feature type="modified residue" description="Phosphothreonine" evidence="3">
    <location>
        <position position="367"/>
    </location>
</feature>
<feature type="modified residue" description="Cysteine methyl ester" evidence="4">
    <location>
        <position position="380"/>
    </location>
</feature>
<feature type="lipid moiety-binding region" description="S-palmitoyl cysteine" evidence="4">
    <location>
        <position position="377"/>
    </location>
</feature>
<feature type="lipid moiety-binding region" description="S-palmitoyl cysteine" evidence="4">
    <location>
        <position position="379"/>
    </location>
</feature>
<feature type="lipid moiety-binding region" description="S-farnesyl cysteine" evidence="4">
    <location>
        <position position="380"/>
    </location>
</feature>
<protein>
    <recommendedName>
        <fullName>Paralemmin-1</fullName>
    </recommendedName>
    <alternativeName>
        <fullName>Paralemmin</fullName>
    </alternativeName>
</protein>
<name>PALM_RAT</name>
<accession>Q920Q0</accession>
<gene>
    <name type="primary">Palm</name>
</gene>
<evidence type="ECO:0000250" key="1"/>
<evidence type="ECO:0000250" key="2">
    <source>
        <dbReference type="UniProtKB" id="O75781"/>
    </source>
</evidence>
<evidence type="ECO:0000250" key="3">
    <source>
        <dbReference type="UniProtKB" id="Q9Z0P4"/>
    </source>
</evidence>
<evidence type="ECO:0000255" key="4"/>
<evidence type="ECO:0000256" key="5">
    <source>
        <dbReference type="SAM" id="MobiDB-lite"/>
    </source>
</evidence>
<evidence type="ECO:0000269" key="6">
    <source>
    </source>
</evidence>
<evidence type="ECO:0000269" key="7">
    <source>
    </source>
</evidence>
<evidence type="ECO:0000305" key="8"/>
<evidence type="ECO:0007744" key="9">
    <source>
    </source>
</evidence>